<feature type="signal peptide" evidence="2">
    <location>
        <begin position="1"/>
        <end position="28"/>
    </location>
</feature>
<feature type="chain" id="PRO_0000000413" description="Glycine receptor subunit alpha-1">
    <location>
        <begin position="29"/>
        <end position="457"/>
    </location>
</feature>
<feature type="topological domain" description="Extracellular" evidence="1">
    <location>
        <begin position="29"/>
        <end position="250"/>
    </location>
</feature>
<feature type="transmembrane region" description="Helical; Name=1" evidence="1">
    <location>
        <begin position="251"/>
        <end position="272"/>
    </location>
</feature>
<feature type="topological domain" description="Cytoplasmic" evidence="1">
    <location>
        <begin position="273"/>
        <end position="277"/>
    </location>
</feature>
<feature type="transmembrane region" description="Helical; Name=2" evidence="1">
    <location>
        <begin position="278"/>
        <end position="298"/>
    </location>
</feature>
<feature type="topological domain" description="Extracellular" evidence="1">
    <location>
        <begin position="299"/>
        <end position="309"/>
    </location>
</feature>
<feature type="transmembrane region" description="Helical; Name=3" evidence="1">
    <location>
        <begin position="310"/>
        <end position="330"/>
    </location>
</feature>
<feature type="topological domain" description="Cytoplasmic" evidence="1">
    <location>
        <begin position="331"/>
        <end position="425"/>
    </location>
</feature>
<feature type="transmembrane region" description="Helical; Name=4" evidence="1">
    <location>
        <begin position="426"/>
        <end position="446"/>
    </location>
</feature>
<feature type="topological domain" description="Extracellular" evidence="1">
    <location>
        <begin position="447"/>
        <end position="457"/>
    </location>
</feature>
<feature type="region of interest" description="Disordered" evidence="4">
    <location>
        <begin position="391"/>
        <end position="410"/>
    </location>
</feature>
<feature type="binding site" evidence="3">
    <location>
        <position position="93"/>
    </location>
    <ligand>
        <name>glycine</name>
        <dbReference type="ChEBI" id="CHEBI:57305"/>
        <label>1</label>
        <note>agonist</note>
    </ligand>
</feature>
<feature type="binding site" evidence="3">
    <location>
        <position position="157"/>
    </location>
    <ligand>
        <name>glycine</name>
        <dbReference type="ChEBI" id="CHEBI:57305"/>
        <label>1</label>
        <note>agonist</note>
    </ligand>
</feature>
<feature type="binding site" evidence="3">
    <location>
        <position position="220"/>
    </location>
    <ligand>
        <name>Zn(2+)</name>
        <dbReference type="ChEBI" id="CHEBI:29105"/>
    </ligand>
</feature>
<feature type="binding site" evidence="3">
    <location>
        <position position="222"/>
    </location>
    <ligand>
        <name>Zn(2+)</name>
        <dbReference type="ChEBI" id="CHEBI:29105"/>
    </ligand>
</feature>
<feature type="binding site" evidence="1">
    <location>
        <begin position="230"/>
        <end position="235"/>
    </location>
    <ligand>
        <name>strychnine</name>
        <dbReference type="ChEBI" id="CHEBI:90700"/>
        <note>antagonist</note>
    </ligand>
</feature>
<feature type="binding site" evidence="3">
    <location>
        <position position="232"/>
    </location>
    <ligand>
        <name>glycine</name>
        <dbReference type="ChEBI" id="CHEBI:57305"/>
        <label>2</label>
        <note>agonist; ligand shared with an adjacent GLRB subunit</note>
    </ligand>
</feature>
<feature type="binding site" evidence="3">
    <location>
        <position position="243"/>
    </location>
    <ligand>
        <name>Zn(2+)</name>
        <dbReference type="ChEBI" id="CHEBI:29105"/>
    </ligand>
</feature>
<feature type="site" description="Important for obstruction of the ion pore in the closed conformation" evidence="1">
    <location>
        <position position="289"/>
    </location>
</feature>
<feature type="glycosylation site" description="N-linked (GlcNAc...) asparagine" evidence="13">
    <location>
        <position position="66"/>
    </location>
</feature>
<feature type="disulfide bond" evidence="3">
    <location>
        <begin position="166"/>
        <end position="180"/>
    </location>
</feature>
<feature type="disulfide bond" evidence="3">
    <location>
        <begin position="226"/>
        <end position="237"/>
    </location>
</feature>
<feature type="splice variant" id="VSP_000080" description="In isoform b." evidence="12">
    <location>
        <begin position="354"/>
        <end position="361"/>
    </location>
</feature>
<feature type="sequence variant" description="In spd." evidence="10">
    <original>A</original>
    <variation>S</variation>
    <location>
        <position position="80"/>
    </location>
</feature>
<feature type="mutagenesis site" description="Eliminates potentiation of glycine-mediated currents by Zn(2+) and causes neuromotor defects similar to human startle disease." evidence="7">
    <original>D</original>
    <variation>A</variation>
    <location>
        <position position="108"/>
    </location>
</feature>
<feature type="mutagenesis site" description="Reduces the increase of channel activity in response to ethanol and improves tolerance of intoxicating levels of alcohol." evidence="8">
    <original>KK</original>
    <variation>AA</variation>
    <location>
        <begin position="421"/>
        <end position="422"/>
    </location>
</feature>
<feature type="sequence conflict" description="In Ref. 2; CAB52398/CAB52399." evidence="13" ref="2">
    <original>M</original>
    <variation>I</variation>
    <location>
        <position position="84"/>
    </location>
</feature>
<feature type="sequence conflict" description="In Ref. 2; CAB52398/CAB52399." evidence="13" ref="2">
    <original>ISRI</original>
    <variation>NISH</variation>
    <location>
        <begin position="426"/>
        <end position="429"/>
    </location>
</feature>
<evidence type="ECO:0000250" key="1">
    <source>
        <dbReference type="UniProtKB" id="O93430"/>
    </source>
</evidence>
<evidence type="ECO:0000250" key="2">
    <source>
        <dbReference type="UniProtKB" id="P07727"/>
    </source>
</evidence>
<evidence type="ECO:0000250" key="3">
    <source>
        <dbReference type="UniProtKB" id="P23415"/>
    </source>
</evidence>
<evidence type="ECO:0000256" key="4">
    <source>
        <dbReference type="SAM" id="MobiDB-lite"/>
    </source>
</evidence>
<evidence type="ECO:0000269" key="5">
    <source>
    </source>
</evidence>
<evidence type="ECO:0000269" key="6">
    <source>
    </source>
</evidence>
<evidence type="ECO:0000269" key="7">
    <source>
    </source>
</evidence>
<evidence type="ECO:0000269" key="8">
    <source>
    </source>
</evidence>
<evidence type="ECO:0000269" key="9">
    <source>
    </source>
</evidence>
<evidence type="ECO:0000269" key="10">
    <source>
    </source>
</evidence>
<evidence type="ECO:0000269" key="11">
    <source>
    </source>
</evidence>
<evidence type="ECO:0000303" key="12">
    <source>
    </source>
</evidence>
<evidence type="ECO:0000305" key="13"/>
<evidence type="ECO:0000305" key="14">
    <source>
    </source>
</evidence>
<evidence type="ECO:0000305" key="15">
    <source>
    </source>
</evidence>
<evidence type="ECO:0000305" key="16">
    <source>
    </source>
</evidence>
<evidence type="ECO:0000305" key="17">
    <source>
    </source>
</evidence>
<comment type="function">
    <text evidence="3 6 7 8 11">Subunit of heteromeric glycine-gated chloride channels (PubMed:16672662, PubMed:17114051, PubMed:24801766). Plays an important role in the down-regulation of neuronal excitability (PubMed:9145798). Contributes to the generation of inhibitory postsynaptic currents (PubMed:16672662, PubMed:17114051, PubMed:24801766). Channel activity is potentiated by ethanol. Potentiation of channel activity by intoxicating levels of ethanol contribute to the sedative effects of ethanol (PubMed:24801766).</text>
</comment>
<comment type="catalytic activity">
    <reaction evidence="6 7 8">
        <text>chloride(in) = chloride(out)</text>
        <dbReference type="Rhea" id="RHEA:29823"/>
        <dbReference type="ChEBI" id="CHEBI:17996"/>
    </reaction>
</comment>
<comment type="activity regulation">
    <text evidence="3 6 7">Channel opening is triggered by extracellular glycine (PubMed:16672662, PubMed:17114051). Channel characteristics depend on the subunit composition; heteropentameric channels are activated by lower glycine levels and display faster desensitization (By similarity). Channel opening is also triggered by taurine and beta-alanine (By similarity). Inhibited by strychnine. Strychnine binding locks the channel in a closed conformation and prevents channel opening in response to extracellular glycine (By similarity). Inhibited by picrotoxin (PubMed:16672662). Channel activity is enhanced by 5 uM Zn(2+) and inhibited by 100 uM Zn(2+) (PubMed:17114051).</text>
</comment>
<comment type="subunit">
    <text evidence="3">Interacts with GLRB to form heteropentameric channels; this is probably the predominant form in vivo. Heteropentamer composed of four GLRA1 subunits and one GLRB subunit. Heteropentamer composed of two GLRA1 and three GLRB. Heteropentamer composed of three GLRA1 and two GLRB. Homopentamer (in vitro). Both homopentamers and heteropentamers form functional ion channels, but their characteristics are subtly different.</text>
</comment>
<comment type="subcellular location">
    <subcellularLocation>
        <location evidence="14 15 16">Postsynaptic cell membrane</location>
        <topology evidence="13">Multi-pass membrane protein</topology>
    </subcellularLocation>
    <subcellularLocation>
        <location evidence="5 7 8">Synapse</location>
    </subcellularLocation>
    <subcellularLocation>
        <location evidence="8">Perikaryon</location>
    </subcellularLocation>
    <subcellularLocation>
        <location evidence="8">Cell projection</location>
        <location evidence="8">Dendrite</location>
    </subcellularLocation>
    <subcellularLocation>
        <location evidence="6 17">Cell membrane</location>
        <topology evidence="3 13">Multi-pass membrane protein</topology>
    </subcellularLocation>
</comment>
<comment type="alternative products">
    <event type="alternative splicing"/>
    <isoform>
        <id>Q64018-1</id>
        <name>a</name>
        <name>Long</name>
        <sequence type="displayed"/>
    </isoform>
    <isoform>
        <id>Q64018-2</id>
        <name>b</name>
        <name>Short</name>
        <sequence type="described" ref="VSP_000080"/>
    </isoform>
</comment>
<comment type="tissue specificity">
    <text evidence="5 6 7 8 11">Detected in spinal cord neurons (PubMed:17114051, PubMed:24801766, PubMed:9145798). Detected in brain stem neurons (PubMed:16672662, PubMed:24801766). Detected at lower levels in hippocampus and cerebellum (PubMed:24801766). Detected in the inner plexiform layer of the retina (at protein level) (PubMed:12975813).</text>
</comment>
<comment type="domain">
    <text evidence="1 3">The channel pore is formed by pentameric assembly of the second transmembrane domain from all five subunits. In the absence of the extracellular domain, the channel is in a constitutively open conformation (By similarity). Channel opening is effected by an outward rotation of the transmembrane domains that increases the diameter of the pore (By similarity).</text>
</comment>
<comment type="disease">
    <text evidence="6 9 10 11">Defects in Glra1 are the cause of the spasmodic (spd) phenotype, a mouse mutant which resembles the human neurological disease, hyperekplexia (or startle disease (STHE)) (PubMed:7920629). Defects in Glra1 are the cause of the lethal oscillator (spd-ot) phenotype. Mutant mice display a fine motor tremor and muscle spasms that begin at 2 weeks of age and progressively worsen, resulting in death by 3 weeks of age (PubMed:7874121). Heterozygous mice show an increased acoustic startle response (PubMed:9145798). Neurons from homozygous oscillator mice have dramatically reduced amplitude and frequency of glycinergic inhibitory postsynaptic currents (PubMed:16672662). The oscillator phenotype is due to the complete absence of Glra1 protein (PubMed:9145798).</text>
</comment>
<comment type="miscellaneous">
    <text evidence="6 9 11">The alpha subunit binds strychnine.</text>
</comment>
<comment type="similarity">
    <text evidence="13">Belongs to the ligand-gated ion channel (TC 1.A.9) family. Glycine receptor (TC 1.A.9.3) subfamily. GLRA1 sub-subfamily.</text>
</comment>
<proteinExistence type="evidence at protein level"/>
<accession>Q64018</accession>
<accession>Q5NCT8</accession>
<accession>Q64019</accession>
<accession>Q9R0Y6</accession>
<accession>Q9R0Y7</accession>
<dbReference type="EMBL" id="S73717">
    <property type="protein sequence ID" value="AAB32157.2"/>
    <property type="molecule type" value="mRNA"/>
</dbReference>
<dbReference type="EMBL" id="S73718">
    <property type="protein sequence ID" value="AAB32158.2"/>
    <property type="molecule type" value="mRNA"/>
</dbReference>
<dbReference type="EMBL" id="X75832">
    <property type="protein sequence ID" value="CAB52398.1"/>
    <property type="molecule type" value="Genomic_DNA"/>
</dbReference>
<dbReference type="EMBL" id="X75833">
    <property type="protein sequence ID" value="CAB52398.1"/>
    <property type="status" value="JOINED"/>
    <property type="molecule type" value="Genomic_DNA"/>
</dbReference>
<dbReference type="EMBL" id="X75834">
    <property type="protein sequence ID" value="CAB52398.1"/>
    <property type="status" value="JOINED"/>
    <property type="molecule type" value="Genomic_DNA"/>
</dbReference>
<dbReference type="EMBL" id="X75835">
    <property type="protein sequence ID" value="CAB52398.1"/>
    <property type="status" value="JOINED"/>
    <property type="molecule type" value="Genomic_DNA"/>
</dbReference>
<dbReference type="EMBL" id="X75836">
    <property type="protein sequence ID" value="CAB52398.1"/>
    <property type="status" value="JOINED"/>
    <property type="molecule type" value="Genomic_DNA"/>
</dbReference>
<dbReference type="EMBL" id="X75837">
    <property type="protein sequence ID" value="CAB52398.1"/>
    <property type="status" value="JOINED"/>
    <property type="molecule type" value="Genomic_DNA"/>
</dbReference>
<dbReference type="EMBL" id="X75838">
    <property type="protein sequence ID" value="CAB52398.1"/>
    <property type="status" value="JOINED"/>
    <property type="molecule type" value="Genomic_DNA"/>
</dbReference>
<dbReference type="EMBL" id="X75839">
    <property type="protein sequence ID" value="CAB52398.1"/>
    <property type="status" value="JOINED"/>
    <property type="molecule type" value="Genomic_DNA"/>
</dbReference>
<dbReference type="EMBL" id="X75840">
    <property type="protein sequence ID" value="CAB52398.1"/>
    <property type="status" value="JOINED"/>
    <property type="molecule type" value="Genomic_DNA"/>
</dbReference>
<dbReference type="EMBL" id="X75832">
    <property type="protein sequence ID" value="CAB52399.1"/>
    <property type="molecule type" value="Genomic_DNA"/>
</dbReference>
<dbReference type="EMBL" id="X75833">
    <property type="protein sequence ID" value="CAB52399.1"/>
    <property type="status" value="JOINED"/>
    <property type="molecule type" value="Genomic_DNA"/>
</dbReference>
<dbReference type="EMBL" id="X75834">
    <property type="protein sequence ID" value="CAB52399.1"/>
    <property type="status" value="JOINED"/>
    <property type="molecule type" value="Genomic_DNA"/>
</dbReference>
<dbReference type="EMBL" id="X75835">
    <property type="protein sequence ID" value="CAB52399.1"/>
    <property type="status" value="JOINED"/>
    <property type="molecule type" value="Genomic_DNA"/>
</dbReference>
<dbReference type="EMBL" id="X75836">
    <property type="protein sequence ID" value="CAB52399.1"/>
    <property type="status" value="JOINED"/>
    <property type="molecule type" value="Genomic_DNA"/>
</dbReference>
<dbReference type="EMBL" id="X75837">
    <property type="protein sequence ID" value="CAB52399.1"/>
    <property type="status" value="JOINED"/>
    <property type="molecule type" value="Genomic_DNA"/>
</dbReference>
<dbReference type="EMBL" id="X75838">
    <property type="protein sequence ID" value="CAB52399.1"/>
    <property type="status" value="JOINED"/>
    <property type="molecule type" value="Genomic_DNA"/>
</dbReference>
<dbReference type="EMBL" id="X75839">
    <property type="protein sequence ID" value="CAB52399.1"/>
    <property type="status" value="JOINED"/>
    <property type="molecule type" value="Genomic_DNA"/>
</dbReference>
<dbReference type="EMBL" id="X75840">
    <property type="protein sequence ID" value="CAB52399.1"/>
    <property type="status" value="JOINED"/>
    <property type="molecule type" value="Genomic_DNA"/>
</dbReference>
<dbReference type="EMBL" id="AL596207">
    <property type="status" value="NOT_ANNOTATED_CDS"/>
    <property type="molecule type" value="Genomic_DNA"/>
</dbReference>
<dbReference type="CCDS" id="CCDS24715.1">
    <molecule id="Q64018-2"/>
</dbReference>
<dbReference type="CCDS" id="CCDS70190.1">
    <molecule id="Q64018-1"/>
</dbReference>
<dbReference type="PIR" id="C49970">
    <property type="entry name" value="C49970"/>
</dbReference>
<dbReference type="RefSeq" id="NP_001277750.1">
    <molecule id="Q64018-1"/>
    <property type="nucleotide sequence ID" value="NM_001290821.1"/>
</dbReference>
<dbReference type="SMR" id="Q64018"/>
<dbReference type="BioGRID" id="199951">
    <property type="interactions" value="1"/>
</dbReference>
<dbReference type="FunCoup" id="Q64018">
    <property type="interactions" value="627"/>
</dbReference>
<dbReference type="STRING" id="10090.ENSMUSP00000075032"/>
<dbReference type="BindingDB" id="Q64018"/>
<dbReference type="ChEMBL" id="CHEMBL4295860"/>
<dbReference type="GlyCosmos" id="Q64018">
    <property type="glycosylation" value="1 site, No reported glycans"/>
</dbReference>
<dbReference type="GlyGen" id="Q64018">
    <property type="glycosylation" value="1 site, 1 N-linked glycan (1 site)"/>
</dbReference>
<dbReference type="iPTMnet" id="Q64018"/>
<dbReference type="PhosphoSitePlus" id="Q64018"/>
<dbReference type="SwissPalm" id="Q64018"/>
<dbReference type="PaxDb" id="10090-ENSMUSP00000099777"/>
<dbReference type="ProteomicsDB" id="266816">
    <molecule id="Q64018-1"/>
</dbReference>
<dbReference type="ProteomicsDB" id="266817">
    <molecule id="Q64018-2"/>
</dbReference>
<dbReference type="Antibodypedia" id="3089">
    <property type="antibodies" value="402 antibodies from 35 providers"/>
</dbReference>
<dbReference type="DNASU" id="14654"/>
<dbReference type="Ensembl" id="ENSMUST00000075603.5">
    <molecule id="Q64018-1"/>
    <property type="protein sequence ID" value="ENSMUSP00000075032.5"/>
    <property type="gene ID" value="ENSMUSG00000000263.16"/>
</dbReference>
<dbReference type="Ensembl" id="ENSMUST00000102716.10">
    <molecule id="Q64018-2"/>
    <property type="protein sequence ID" value="ENSMUSP00000099777.4"/>
    <property type="gene ID" value="ENSMUSG00000000263.16"/>
</dbReference>
<dbReference type="GeneID" id="14654"/>
<dbReference type="KEGG" id="mmu:14654"/>
<dbReference type="UCSC" id="uc007izo.2">
    <molecule id="Q64018-1"/>
    <property type="organism name" value="mouse"/>
</dbReference>
<dbReference type="AGR" id="MGI:95747"/>
<dbReference type="CTD" id="2741"/>
<dbReference type="MGI" id="MGI:95747">
    <property type="gene designation" value="Glra1"/>
</dbReference>
<dbReference type="VEuPathDB" id="HostDB:ENSMUSG00000000263"/>
<dbReference type="eggNOG" id="KOG3644">
    <property type="taxonomic scope" value="Eukaryota"/>
</dbReference>
<dbReference type="GeneTree" id="ENSGT00940000159047"/>
<dbReference type="HOGENOM" id="CLU_010920_1_4_1"/>
<dbReference type="InParanoid" id="Q64018"/>
<dbReference type="OMA" id="CELHMQP"/>
<dbReference type="OrthoDB" id="407674at2759"/>
<dbReference type="PhylomeDB" id="Q64018"/>
<dbReference type="TreeFam" id="TF315453"/>
<dbReference type="Reactome" id="R-MMU-112314">
    <property type="pathway name" value="Neurotransmitter receptors and postsynaptic signal transmission"/>
</dbReference>
<dbReference type="BioGRID-ORCS" id="14654">
    <property type="hits" value="1 hit in 78 CRISPR screens"/>
</dbReference>
<dbReference type="ChiTaRS" id="Glra1">
    <property type="organism name" value="mouse"/>
</dbReference>
<dbReference type="PRO" id="PR:Q64018"/>
<dbReference type="Proteomes" id="UP000000589">
    <property type="component" value="Chromosome 11"/>
</dbReference>
<dbReference type="RNAct" id="Q64018">
    <property type="molecule type" value="protein"/>
</dbReference>
<dbReference type="Bgee" id="ENSMUSG00000000263">
    <property type="expression patterns" value="Expressed in medial vestibular nucleus and 49 other cell types or tissues"/>
</dbReference>
<dbReference type="ExpressionAtlas" id="Q64018">
    <property type="expression patterns" value="baseline and differential"/>
</dbReference>
<dbReference type="GO" id="GO:0034707">
    <property type="term" value="C:chloride channel complex"/>
    <property type="evidence" value="ECO:0007669"/>
    <property type="project" value="UniProtKB-KW"/>
</dbReference>
<dbReference type="GO" id="GO:0030425">
    <property type="term" value="C:dendrite"/>
    <property type="evidence" value="ECO:0007669"/>
    <property type="project" value="UniProtKB-SubCell"/>
</dbReference>
<dbReference type="GO" id="GO:0009897">
    <property type="term" value="C:external side of plasma membrane"/>
    <property type="evidence" value="ECO:0000314"/>
    <property type="project" value="MGI"/>
</dbReference>
<dbReference type="GO" id="GO:0098690">
    <property type="term" value="C:glycinergic synapse"/>
    <property type="evidence" value="ECO:0000314"/>
    <property type="project" value="SynGO"/>
</dbReference>
<dbReference type="GO" id="GO:0060077">
    <property type="term" value="C:inhibitory synapse"/>
    <property type="evidence" value="ECO:0000314"/>
    <property type="project" value="MGI"/>
</dbReference>
<dbReference type="GO" id="GO:0043231">
    <property type="term" value="C:intracellular membrane-bounded organelle"/>
    <property type="evidence" value="ECO:0000250"/>
    <property type="project" value="UniProtKB"/>
</dbReference>
<dbReference type="GO" id="GO:0016020">
    <property type="term" value="C:membrane"/>
    <property type="evidence" value="ECO:0000314"/>
    <property type="project" value="MGI"/>
</dbReference>
<dbReference type="GO" id="GO:0043005">
    <property type="term" value="C:neuron projection"/>
    <property type="evidence" value="ECO:0000314"/>
    <property type="project" value="UniProtKB"/>
</dbReference>
<dbReference type="GO" id="GO:0043025">
    <property type="term" value="C:neuronal cell body"/>
    <property type="evidence" value="ECO:0000314"/>
    <property type="project" value="UniProtKB"/>
</dbReference>
<dbReference type="GO" id="GO:0043204">
    <property type="term" value="C:perikaryon"/>
    <property type="evidence" value="ECO:0007669"/>
    <property type="project" value="UniProtKB-SubCell"/>
</dbReference>
<dbReference type="GO" id="GO:0005886">
    <property type="term" value="C:plasma membrane"/>
    <property type="evidence" value="ECO:0000250"/>
    <property type="project" value="UniProtKB"/>
</dbReference>
<dbReference type="GO" id="GO:0045211">
    <property type="term" value="C:postsynaptic membrane"/>
    <property type="evidence" value="ECO:0000314"/>
    <property type="project" value="MGI"/>
</dbReference>
<dbReference type="GO" id="GO:0045202">
    <property type="term" value="C:synapse"/>
    <property type="evidence" value="ECO:0000314"/>
    <property type="project" value="UniProtKB"/>
</dbReference>
<dbReference type="GO" id="GO:0016934">
    <property type="term" value="F:extracellularly glycine-gated chloride channel activity"/>
    <property type="evidence" value="ECO:0000314"/>
    <property type="project" value="MGI"/>
</dbReference>
<dbReference type="GO" id="GO:0016594">
    <property type="term" value="F:glycine binding"/>
    <property type="evidence" value="ECO:0000314"/>
    <property type="project" value="MGI"/>
</dbReference>
<dbReference type="GO" id="GO:0099507">
    <property type="term" value="F:ligand-gated monoatomic ion channel activity involved in regulation of presynaptic membrane potential"/>
    <property type="evidence" value="ECO:0007669"/>
    <property type="project" value="Ensembl"/>
</dbReference>
<dbReference type="GO" id="GO:0030977">
    <property type="term" value="F:taurine binding"/>
    <property type="evidence" value="ECO:0000250"/>
    <property type="project" value="UniProtKB"/>
</dbReference>
<dbReference type="GO" id="GO:0004888">
    <property type="term" value="F:transmembrane signaling receptor activity"/>
    <property type="evidence" value="ECO:0007669"/>
    <property type="project" value="InterPro"/>
</dbReference>
<dbReference type="GO" id="GO:1904315">
    <property type="term" value="F:transmitter-gated monoatomic ion channel activity involved in regulation of postsynaptic membrane potential"/>
    <property type="evidence" value="ECO:0000314"/>
    <property type="project" value="SynGO"/>
</dbReference>
<dbReference type="GO" id="GO:0008270">
    <property type="term" value="F:zinc ion binding"/>
    <property type="evidence" value="ECO:0000250"/>
    <property type="project" value="UniProtKB"/>
</dbReference>
<dbReference type="GO" id="GO:0007340">
    <property type="term" value="P:acrosome reaction"/>
    <property type="evidence" value="ECO:0000315"/>
    <property type="project" value="MGI"/>
</dbReference>
<dbReference type="GO" id="GO:0007628">
    <property type="term" value="P:adult walking behavior"/>
    <property type="evidence" value="ECO:0000315"/>
    <property type="project" value="MGI"/>
</dbReference>
<dbReference type="GO" id="GO:0071230">
    <property type="term" value="P:cellular response to amino acid stimulus"/>
    <property type="evidence" value="ECO:0000250"/>
    <property type="project" value="UniProtKB"/>
</dbReference>
<dbReference type="GO" id="GO:0071361">
    <property type="term" value="P:cellular response to ethanol"/>
    <property type="evidence" value="ECO:0000250"/>
    <property type="project" value="UniProtKB"/>
</dbReference>
<dbReference type="GO" id="GO:0071294">
    <property type="term" value="P:cellular response to zinc ion"/>
    <property type="evidence" value="ECO:0000250"/>
    <property type="project" value="UniProtKB"/>
</dbReference>
<dbReference type="GO" id="GO:0007268">
    <property type="term" value="P:chemical synaptic transmission"/>
    <property type="evidence" value="ECO:0000315"/>
    <property type="project" value="MGI"/>
</dbReference>
<dbReference type="GO" id="GO:0006821">
    <property type="term" value="P:chloride transport"/>
    <property type="evidence" value="ECO:0000250"/>
    <property type="project" value="UniProtKB"/>
</dbReference>
<dbReference type="GO" id="GO:0060080">
    <property type="term" value="P:inhibitory postsynaptic potential"/>
    <property type="evidence" value="ECO:0000315"/>
    <property type="project" value="UniProtKB"/>
</dbReference>
<dbReference type="GO" id="GO:0006811">
    <property type="term" value="P:monoatomic ion transport"/>
    <property type="evidence" value="ECO:0000250"/>
    <property type="project" value="UniProtKB"/>
</dbReference>
<dbReference type="GO" id="GO:0006936">
    <property type="term" value="P:muscle contraction"/>
    <property type="evidence" value="ECO:0000250"/>
    <property type="project" value="UniProtKB"/>
</dbReference>
<dbReference type="GO" id="GO:0051970">
    <property type="term" value="P:negative regulation of transmission of nerve impulse"/>
    <property type="evidence" value="ECO:0000250"/>
    <property type="project" value="UniProtKB"/>
</dbReference>
<dbReference type="GO" id="GO:0050905">
    <property type="term" value="P:neuromuscular process"/>
    <property type="evidence" value="ECO:0000315"/>
    <property type="project" value="MGI"/>
</dbReference>
<dbReference type="GO" id="GO:0050884">
    <property type="term" value="P:neuromuscular process controlling posture"/>
    <property type="evidence" value="ECO:0000315"/>
    <property type="project" value="MGI"/>
</dbReference>
<dbReference type="GO" id="GO:0019228">
    <property type="term" value="P:neuronal action potential"/>
    <property type="evidence" value="ECO:0000315"/>
    <property type="project" value="MGI"/>
</dbReference>
<dbReference type="GO" id="GO:0007218">
    <property type="term" value="P:neuropeptide signaling pathway"/>
    <property type="evidence" value="ECO:0000250"/>
    <property type="project" value="UniProtKB"/>
</dbReference>
<dbReference type="GO" id="GO:2000344">
    <property type="term" value="P:positive regulation of acrosome reaction"/>
    <property type="evidence" value="ECO:0007669"/>
    <property type="project" value="Ensembl"/>
</dbReference>
<dbReference type="GO" id="GO:0042391">
    <property type="term" value="P:regulation of membrane potential"/>
    <property type="evidence" value="ECO:0000314"/>
    <property type="project" value="MGI"/>
</dbReference>
<dbReference type="GO" id="GO:0043576">
    <property type="term" value="P:regulation of respiratory gaseous exchange"/>
    <property type="evidence" value="ECO:0000315"/>
    <property type="project" value="MGI"/>
</dbReference>
<dbReference type="GO" id="GO:0002087">
    <property type="term" value="P:regulation of respiratory gaseous exchange by nervous system process"/>
    <property type="evidence" value="ECO:0000315"/>
    <property type="project" value="MGI"/>
</dbReference>
<dbReference type="GO" id="GO:0097305">
    <property type="term" value="P:response to alcohol"/>
    <property type="evidence" value="ECO:0000315"/>
    <property type="project" value="UniProtKB"/>
</dbReference>
<dbReference type="GO" id="GO:0060013">
    <property type="term" value="P:righting reflex"/>
    <property type="evidence" value="ECO:0000315"/>
    <property type="project" value="MGI"/>
</dbReference>
<dbReference type="GO" id="GO:0001964">
    <property type="term" value="P:startle response"/>
    <property type="evidence" value="ECO:0000315"/>
    <property type="project" value="MGI"/>
</dbReference>
<dbReference type="GO" id="GO:0060012">
    <property type="term" value="P:synaptic transmission, glycinergic"/>
    <property type="evidence" value="ECO:0000315"/>
    <property type="project" value="UniProtKB"/>
</dbReference>
<dbReference type="GO" id="GO:0007601">
    <property type="term" value="P:visual perception"/>
    <property type="evidence" value="ECO:0000315"/>
    <property type="project" value="MGI"/>
</dbReference>
<dbReference type="CDD" id="cd19009">
    <property type="entry name" value="LGIC_ECD_GlyR_alpha"/>
    <property type="match status" value="1"/>
</dbReference>
<dbReference type="CDD" id="cd19060">
    <property type="entry name" value="LGIC_TM_GlyR_alpha"/>
    <property type="match status" value="1"/>
</dbReference>
<dbReference type="FunFam" id="2.70.170.10:FF:000002">
    <property type="entry name" value="Glycine receptor alpha 1 subunit"/>
    <property type="match status" value="1"/>
</dbReference>
<dbReference type="FunFam" id="1.20.58.390:FF:000003">
    <property type="entry name" value="Glycine receptor alpha 2 subunit"/>
    <property type="match status" value="1"/>
</dbReference>
<dbReference type="Gene3D" id="2.70.170.10">
    <property type="entry name" value="Neurotransmitter-gated ion-channel ligand-binding domain"/>
    <property type="match status" value="1"/>
</dbReference>
<dbReference type="Gene3D" id="1.20.58.390">
    <property type="entry name" value="Neurotransmitter-gated ion-channel transmembrane domain"/>
    <property type="match status" value="1"/>
</dbReference>
<dbReference type="InterPro" id="IPR006028">
    <property type="entry name" value="GABAA/Glycine_rcpt"/>
</dbReference>
<dbReference type="InterPro" id="IPR008127">
    <property type="entry name" value="Glycine_rcpt_A"/>
</dbReference>
<dbReference type="InterPro" id="IPR008128">
    <property type="entry name" value="Glycine_rcpt_A1"/>
</dbReference>
<dbReference type="InterPro" id="IPR006202">
    <property type="entry name" value="Neur_chan_lig-bd"/>
</dbReference>
<dbReference type="InterPro" id="IPR036734">
    <property type="entry name" value="Neur_chan_lig-bd_sf"/>
</dbReference>
<dbReference type="InterPro" id="IPR006201">
    <property type="entry name" value="Neur_channel"/>
</dbReference>
<dbReference type="InterPro" id="IPR036719">
    <property type="entry name" value="Neuro-gated_channel_TM_sf"/>
</dbReference>
<dbReference type="InterPro" id="IPR038050">
    <property type="entry name" value="Neuro_actylchol_rec"/>
</dbReference>
<dbReference type="InterPro" id="IPR006029">
    <property type="entry name" value="Neurotrans-gated_channel_TM"/>
</dbReference>
<dbReference type="InterPro" id="IPR018000">
    <property type="entry name" value="Neurotransmitter_ion_chnl_CS"/>
</dbReference>
<dbReference type="NCBIfam" id="TIGR00860">
    <property type="entry name" value="LIC"/>
    <property type="match status" value="1"/>
</dbReference>
<dbReference type="PANTHER" id="PTHR18945">
    <property type="entry name" value="NEUROTRANSMITTER GATED ION CHANNEL"/>
    <property type="match status" value="1"/>
</dbReference>
<dbReference type="Pfam" id="PF02931">
    <property type="entry name" value="Neur_chan_LBD"/>
    <property type="match status" value="1"/>
</dbReference>
<dbReference type="Pfam" id="PF02932">
    <property type="entry name" value="Neur_chan_memb"/>
    <property type="match status" value="1"/>
</dbReference>
<dbReference type="PRINTS" id="PR00253">
    <property type="entry name" value="GABAARECEPTR"/>
</dbReference>
<dbReference type="PRINTS" id="PR01673">
    <property type="entry name" value="GLYRALPHA"/>
</dbReference>
<dbReference type="PRINTS" id="PR01674">
    <property type="entry name" value="GLYRALPHA1"/>
</dbReference>
<dbReference type="PRINTS" id="PR00252">
    <property type="entry name" value="NRIONCHANNEL"/>
</dbReference>
<dbReference type="SUPFAM" id="SSF90112">
    <property type="entry name" value="Neurotransmitter-gated ion-channel transmembrane pore"/>
    <property type="match status" value="1"/>
</dbReference>
<dbReference type="SUPFAM" id="SSF63712">
    <property type="entry name" value="Nicotinic receptor ligand binding domain-like"/>
    <property type="match status" value="1"/>
</dbReference>
<dbReference type="PROSITE" id="PS00236">
    <property type="entry name" value="NEUROTR_ION_CHANNEL"/>
    <property type="match status" value="1"/>
</dbReference>
<protein>
    <recommendedName>
        <fullName>Glycine receptor subunit alpha-1</fullName>
    </recommendedName>
    <alternativeName>
        <fullName>Glycine receptor 48 kDa subunit</fullName>
    </alternativeName>
    <alternativeName>
        <fullName>Glycine receptor strychnine-binding subunit</fullName>
    </alternativeName>
</protein>
<gene>
    <name type="primary">Glra1</name>
</gene>
<keyword id="KW-0025">Alternative splicing</keyword>
<keyword id="KW-1003">Cell membrane</keyword>
<keyword id="KW-0966">Cell projection</keyword>
<keyword id="KW-0868">Chloride</keyword>
<keyword id="KW-0869">Chloride channel</keyword>
<keyword id="KW-0225">Disease variant</keyword>
<keyword id="KW-1015">Disulfide bond</keyword>
<keyword id="KW-0325">Glycoprotein</keyword>
<keyword id="KW-0407">Ion channel</keyword>
<keyword id="KW-0406">Ion transport</keyword>
<keyword id="KW-1071">Ligand-gated ion channel</keyword>
<keyword id="KW-0472">Membrane</keyword>
<keyword id="KW-0479">Metal-binding</keyword>
<keyword id="KW-0628">Postsynaptic cell membrane</keyword>
<keyword id="KW-0675">Receptor</keyword>
<keyword id="KW-1185">Reference proteome</keyword>
<keyword id="KW-0732">Signal</keyword>
<keyword id="KW-0770">Synapse</keyword>
<keyword id="KW-0812">Transmembrane</keyword>
<keyword id="KW-1133">Transmembrane helix</keyword>
<keyword id="KW-0813">Transport</keyword>
<keyword id="KW-0862">Zinc</keyword>
<organism>
    <name type="scientific">Mus musculus</name>
    <name type="common">Mouse</name>
    <dbReference type="NCBI Taxonomy" id="10090"/>
    <lineage>
        <taxon>Eukaryota</taxon>
        <taxon>Metazoa</taxon>
        <taxon>Chordata</taxon>
        <taxon>Craniata</taxon>
        <taxon>Vertebrata</taxon>
        <taxon>Euteleostomi</taxon>
        <taxon>Mammalia</taxon>
        <taxon>Eutheria</taxon>
        <taxon>Euarchontoglires</taxon>
        <taxon>Glires</taxon>
        <taxon>Rodentia</taxon>
        <taxon>Myomorpha</taxon>
        <taxon>Muroidea</taxon>
        <taxon>Muridae</taxon>
        <taxon>Murinae</taxon>
        <taxon>Mus</taxon>
        <taxon>Mus</taxon>
    </lineage>
</organism>
<sequence>MYSFNTLRFYLWETIVFFSLAASKEAEAARSAPKPMSPSDFLDKLMGRTSGYDARIRPNFKGPPVNVSCNIFINSFGSIAETTMDYRVNIFLRQQWNDPRLAYNEYPDDSLDLDPSMLDSIWKPDLFFANEKGAHFHEITTDNKLLRISRNGNVLYSIRITLTLACPMDLKNFPMDVQTCIMQLESFGYTMNDLIFEWQEQGAVQVADGLTLPQFILKEEKDLRYCTKHYNTGKFTCIEARFHLERQMGYYLIQMYIPSLLIVILSWISFWINMDAAPARVGLGITTVLTMTTQSSGSRASLPKVSYVKAIDIWMAVCLLFVFSALLEYAAVNFVSRQHKELLRFRRKRRHHKSPMLNLFQDDEGGEGRFNFSAYGMGPACLQAKDGISVKGANNNNTTNPPPAPSKSPEEMRKLFIQRAKKIDKISRIGFPMAFLIFNMFYWIIYKIVRREDVHNK</sequence>
<name>GLRA1_MOUSE</name>
<reference key="1">
    <citation type="journal article" date="1994" name="Nat. Genet.">
        <title>A missense mutation in the gene encoding the alpha 1 subunit of the inhibitory glycine receptor in the spasmodic mouse.</title>
        <authorList>
            <person name="Ryan S.G."/>
            <person name="Buckwalter M.S."/>
            <person name="Lynch J.W."/>
            <person name="Handford C.A."/>
            <person name="Segura L."/>
            <person name="Shiang R."/>
            <person name="Wasmuth J.J."/>
            <person name="Camper S.A."/>
            <person name="Schofield P."/>
            <person name="O'Connell P."/>
        </authorList>
    </citation>
    <scope>NUCLEOTIDE SEQUENCE [MRNA] (ISOFORMS A AND B)</scope>
    <scope>VARIANT SPD SER-80</scope>
    <scope>DISEASE</scope>
</reference>
<reference key="2">
    <citation type="journal article" date="1994" name="J. Biol. Chem.">
        <title>Structural analysis of mouse glycine receptor alpha subunit genes. Identification and chromosomal localization of a novel variant.</title>
        <authorList>
            <person name="Matzenbach B."/>
            <person name="Maulet Y."/>
            <person name="Sefton L."/>
            <person name="Courtier B."/>
            <person name="Avner P."/>
            <person name="Guenet J.-L."/>
            <person name="Betz H."/>
        </authorList>
    </citation>
    <scope>NUCLEOTIDE SEQUENCE [GENOMIC DNA]</scope>
    <scope>ALTERNATIVE SPLICING</scope>
    <source>
        <strain>BALB/cJ</strain>
    </source>
</reference>
<reference key="3">
    <citation type="journal article" date="2009" name="PLoS Biol.">
        <title>Lineage-specific biology revealed by a finished genome assembly of the mouse.</title>
        <authorList>
            <person name="Church D.M."/>
            <person name="Goodstadt L."/>
            <person name="Hillier L.W."/>
            <person name="Zody M.C."/>
            <person name="Goldstein S."/>
            <person name="She X."/>
            <person name="Bult C.J."/>
            <person name="Agarwala R."/>
            <person name="Cherry J.L."/>
            <person name="DiCuccio M."/>
            <person name="Hlavina W."/>
            <person name="Kapustin Y."/>
            <person name="Meric P."/>
            <person name="Maglott D."/>
            <person name="Birtle Z."/>
            <person name="Marques A.C."/>
            <person name="Graves T."/>
            <person name="Zhou S."/>
            <person name="Teague B."/>
            <person name="Potamousis K."/>
            <person name="Churas C."/>
            <person name="Place M."/>
            <person name="Herschleb J."/>
            <person name="Runnheim R."/>
            <person name="Forrest D."/>
            <person name="Amos-Landgraf J."/>
            <person name="Schwartz D.C."/>
            <person name="Cheng Z."/>
            <person name="Lindblad-Toh K."/>
            <person name="Eichler E.E."/>
            <person name="Ponting C.P."/>
        </authorList>
    </citation>
    <scope>NUCLEOTIDE SEQUENCE [LARGE SCALE GENOMIC DNA]</scope>
    <source>
        <strain>C57BL/6J</strain>
    </source>
</reference>
<reference key="4">
    <citation type="journal article" date="1994" name="Hum. Mol. Genet.">
        <title>A frameshift mutation in the mouse alpha 1 glycine receptor gene (Glra1) results in progressive neurological symptoms and juvenile death.</title>
        <authorList>
            <person name="Buckwalter M.S."/>
            <person name="Cook S.A."/>
            <person name="Davisson M.T."/>
            <person name="White W.F."/>
            <person name="Camper S.A."/>
        </authorList>
    </citation>
    <scope>DISEASE</scope>
</reference>
<reference key="5">
    <citation type="journal article" date="1997" name="Neuroscience">
        <title>The frameshift mutation oscillator (Glra1(spd-ot)) produces a complete loss of glycine receptor alpha1-polypeptide in mouse central nervous system.</title>
        <authorList>
            <person name="Kling C."/>
            <person name="Koch M."/>
            <person name="Saul B."/>
            <person name="Becker C.M."/>
        </authorList>
    </citation>
    <scope>DISEASE</scope>
    <scope>FUNCTION</scope>
    <scope>SUBCELLULAR LOCATION</scope>
    <scope>TISSUE SPECIFICITY</scope>
</reference>
<reference key="6">
    <citation type="journal article" date="2003" name="J. Comp. Neurol.">
        <title>Diversity of glycine receptors in the mouse retina: localization of the alpha3 subunit.</title>
        <authorList>
            <person name="Haverkamp S."/>
            <person name="Mueller U."/>
            <person name="Harvey K."/>
            <person name="Harvey R.J."/>
            <person name="Betz H."/>
            <person name="Waessle H."/>
        </authorList>
    </citation>
    <scope>SUBCELLULAR LOCATION</scope>
    <scope>TISSUE SPECIFICITY</scope>
</reference>
<reference key="7">
    <citation type="journal article" date="2006" name="J. Neurosci.">
        <title>Distinct physiological mechanisms underlie altered glycinergic synaptic transmission in the murine mutants spastic, spasmodic, and oscillator.</title>
        <authorList>
            <person name="Graham B.A."/>
            <person name="Schofield P.R."/>
            <person name="Sah P."/>
            <person name="Margrie T.W."/>
            <person name="Callister R.J."/>
        </authorList>
    </citation>
    <scope>FUNCTION</scope>
    <scope>TRANSPORTER ACTIVITY</scope>
    <scope>ACTIVITY REGULATION</scope>
    <scope>SUBCELLULAR LOCATION</scope>
    <scope>TISSUE SPECIFICITY</scope>
    <scope>DISEASE</scope>
</reference>
<reference key="8">
    <citation type="journal article" date="2006" name="Neuron">
        <title>Hyperekplexia phenotype of glycine receptor alpha1 subunit mutant mice identifies Zn(2+) as an essential endogenous modulator of glycinergic neurotransmission.</title>
        <authorList>
            <person name="Hirzel K."/>
            <person name="Mueller U."/>
            <person name="Latal A.T."/>
            <person name="Huelsmann S."/>
            <person name="Grudzinska J."/>
            <person name="Seeliger M.W."/>
            <person name="Betz H."/>
            <person name="Laube B."/>
        </authorList>
    </citation>
    <scope>FUNCTION</scope>
    <scope>TRANSPORTER ACTIVITY</scope>
    <scope>ACTIVITY REGULATION</scope>
    <scope>SUBCELLULAR LOCATION</scope>
    <scope>TISSUE SPECIFICITY</scope>
    <scope>MUTAGENESIS OF ASP-108</scope>
</reference>
<reference key="9">
    <citation type="journal article" date="2014" name="Neuropsychopharmacology">
        <title>Altered sedative effects of ethanol in mice with alpha1 glycine receptor subunits that are insensitive to Gbetagamma modulation.</title>
        <authorList>
            <person name="Aguayo L.G."/>
            <person name="Castro P."/>
            <person name="Mariqueo T."/>
            <person name="Munoz B."/>
            <person name="Xiong W."/>
            <person name="Zhang L."/>
            <person name="Lovinger D.M."/>
            <person name="Homanics G.E."/>
        </authorList>
    </citation>
    <scope>FUNCTION</scope>
    <scope>TRANSPORTER ACTIVITY</scope>
    <scope>SUBCELLULAR LOCATION</scope>
    <scope>TISSUE SPECIFICITY</scope>
    <scope>MUTAGENESIS OF 420-LYS-LYS-421</scope>
</reference>